<evidence type="ECO:0000255" key="1">
    <source>
        <dbReference type="HAMAP-Rule" id="MF_03029"/>
    </source>
</evidence>
<name>WDR12_DROMO</name>
<gene>
    <name type="ORF">GI17814</name>
</gene>
<sequence length="419" mass="47140">MEVENGEGQVQVHLKTKQEQYAVPDVPYAIEGSVSTTELNIFLNALLQNKGAESVDFDFLVFDEYLRGRLCDHLREKAISFEDSIEIEYVERFPAPEPQDCLLHDDWVSAVKASGKWILTGCYDNTLNIWTYKGKHKLTIPGHTAPIKAVDWISLDNENGRFVSTSQDQTAMMWQWNIASNAVECVSVCKGHERGVDSVCVSPDAQRFATGSWDTMLKIWSAELEDAGESTAKRAKESGVRTPRMTLQGHRESISAVQWMDNNTLLTGSWDHTLKVWDLNLEGIKTEISTNKSIFDASHSKLNNLIVTASADKNLRLYDARTNQGSVVRSTYLGHNAWVQTVMWSITEEFLFVSGAYDNQNKLWDCRSPKAPLYDLLGHGEKVLDIDWSNPKYIVSGGADNTVRVFKSSKATVENMETK</sequence>
<comment type="function">
    <text evidence="1">Required for maturation of ribosomal RNAs and formation of the large ribosomal subunit.</text>
</comment>
<comment type="subcellular location">
    <subcellularLocation>
        <location evidence="1">Nucleus</location>
        <location evidence="1">Nucleolus</location>
    </subcellularLocation>
    <subcellularLocation>
        <location evidence="1">Nucleus</location>
        <location evidence="1">Nucleoplasm</location>
    </subcellularLocation>
</comment>
<comment type="similarity">
    <text evidence="1">Belongs to the WD repeat WDR12/YTM1 family.</text>
</comment>
<protein>
    <recommendedName>
        <fullName evidence="1">Ribosome biogenesis protein WDR12 homolog</fullName>
    </recommendedName>
</protein>
<proteinExistence type="inferred from homology"/>
<dbReference type="EMBL" id="CH933807">
    <property type="protein sequence ID" value="EDW12695.1"/>
    <property type="molecule type" value="Genomic_DNA"/>
</dbReference>
<dbReference type="SMR" id="B4KKN1"/>
<dbReference type="FunCoup" id="B4KKN1">
    <property type="interactions" value="1774"/>
</dbReference>
<dbReference type="EnsemblMetazoa" id="FBtr0168539">
    <property type="protein sequence ID" value="FBpp0167031"/>
    <property type="gene ID" value="FBgn0140555"/>
</dbReference>
<dbReference type="EnsemblMetazoa" id="XM_002003217.4">
    <property type="protein sequence ID" value="XP_002003253.1"/>
    <property type="gene ID" value="LOC6577286"/>
</dbReference>
<dbReference type="GeneID" id="6577286"/>
<dbReference type="KEGG" id="dmo:Dmoj_GI17814"/>
<dbReference type="eggNOG" id="KOG0313">
    <property type="taxonomic scope" value="Eukaryota"/>
</dbReference>
<dbReference type="HOGENOM" id="CLU_000288_57_0_1"/>
<dbReference type="InParanoid" id="B4KKN1"/>
<dbReference type="OMA" id="DHKYVEF"/>
<dbReference type="OrthoDB" id="10251381at2759"/>
<dbReference type="PhylomeDB" id="B4KKN1"/>
<dbReference type="Proteomes" id="UP000009192">
    <property type="component" value="Unassembled WGS sequence"/>
</dbReference>
<dbReference type="GO" id="GO:0005654">
    <property type="term" value="C:nucleoplasm"/>
    <property type="evidence" value="ECO:0007669"/>
    <property type="project" value="UniProtKB-SubCell"/>
</dbReference>
<dbReference type="GO" id="GO:0070545">
    <property type="term" value="C:PeBoW complex"/>
    <property type="evidence" value="ECO:0000250"/>
    <property type="project" value="UniProtKB"/>
</dbReference>
<dbReference type="GO" id="GO:0030687">
    <property type="term" value="C:preribosome, large subunit precursor"/>
    <property type="evidence" value="ECO:0007669"/>
    <property type="project" value="UniProtKB-UniRule"/>
</dbReference>
<dbReference type="GO" id="GO:0043021">
    <property type="term" value="F:ribonucleoprotein complex binding"/>
    <property type="evidence" value="ECO:0007669"/>
    <property type="project" value="UniProtKB-UniRule"/>
</dbReference>
<dbReference type="GO" id="GO:0000466">
    <property type="term" value="P:maturation of 5.8S rRNA from tricistronic rRNA transcript (SSU-rRNA, 5.8S rRNA, LSU-rRNA)"/>
    <property type="evidence" value="ECO:0007669"/>
    <property type="project" value="UniProtKB-UniRule"/>
</dbReference>
<dbReference type="GO" id="GO:0000463">
    <property type="term" value="P:maturation of LSU-rRNA from tricistronic rRNA transcript (SSU-rRNA, 5.8S rRNA, LSU-rRNA)"/>
    <property type="evidence" value="ECO:0000250"/>
    <property type="project" value="UniProtKB"/>
</dbReference>
<dbReference type="CDD" id="cd00200">
    <property type="entry name" value="WD40"/>
    <property type="match status" value="1"/>
</dbReference>
<dbReference type="FunFam" id="2.130.10.10:FF:000878">
    <property type="entry name" value="Ribosome biogenesis protein WDR12 homolog"/>
    <property type="match status" value="1"/>
</dbReference>
<dbReference type="FunFam" id="2.130.10.10:FF:000989">
    <property type="entry name" value="Ribosome biogenesis protein WDR12 homolog"/>
    <property type="match status" value="1"/>
</dbReference>
<dbReference type="FunFam" id="2.130.10.10:FF:001205">
    <property type="entry name" value="Ribosome biogenesis protein WDR12 homolog"/>
    <property type="match status" value="1"/>
</dbReference>
<dbReference type="Gene3D" id="2.130.10.10">
    <property type="entry name" value="YVTN repeat-like/Quinoprotein amine dehydrogenase"/>
    <property type="match status" value="3"/>
</dbReference>
<dbReference type="HAMAP" id="MF_03029">
    <property type="entry name" value="WDR12"/>
    <property type="match status" value="1"/>
</dbReference>
<dbReference type="InterPro" id="IPR020472">
    <property type="entry name" value="G-protein_beta_WD-40_rep"/>
</dbReference>
<dbReference type="InterPro" id="IPR012972">
    <property type="entry name" value="NLE"/>
</dbReference>
<dbReference type="InterPro" id="IPR015943">
    <property type="entry name" value="WD40/YVTN_repeat-like_dom_sf"/>
</dbReference>
<dbReference type="InterPro" id="IPR019775">
    <property type="entry name" value="WD40_repeat_CS"/>
</dbReference>
<dbReference type="InterPro" id="IPR036322">
    <property type="entry name" value="WD40_repeat_dom_sf"/>
</dbReference>
<dbReference type="InterPro" id="IPR001680">
    <property type="entry name" value="WD40_rpt"/>
</dbReference>
<dbReference type="InterPro" id="IPR028599">
    <property type="entry name" value="WDR12/Ytm1"/>
</dbReference>
<dbReference type="PANTHER" id="PTHR19855:SF11">
    <property type="entry name" value="RIBOSOME BIOGENESIS PROTEIN WDR12"/>
    <property type="match status" value="1"/>
</dbReference>
<dbReference type="PANTHER" id="PTHR19855">
    <property type="entry name" value="WD40 REPEAT PROTEIN 12, 37"/>
    <property type="match status" value="1"/>
</dbReference>
<dbReference type="Pfam" id="PF08154">
    <property type="entry name" value="NLE"/>
    <property type="match status" value="1"/>
</dbReference>
<dbReference type="Pfam" id="PF00400">
    <property type="entry name" value="WD40"/>
    <property type="match status" value="7"/>
</dbReference>
<dbReference type="PRINTS" id="PR00320">
    <property type="entry name" value="GPROTEINBRPT"/>
</dbReference>
<dbReference type="SMART" id="SM00320">
    <property type="entry name" value="WD40"/>
    <property type="match status" value="7"/>
</dbReference>
<dbReference type="SUPFAM" id="SSF50978">
    <property type="entry name" value="WD40 repeat-like"/>
    <property type="match status" value="1"/>
</dbReference>
<dbReference type="PROSITE" id="PS00678">
    <property type="entry name" value="WD_REPEATS_1"/>
    <property type="match status" value="1"/>
</dbReference>
<dbReference type="PROSITE" id="PS50082">
    <property type="entry name" value="WD_REPEATS_2"/>
    <property type="match status" value="4"/>
</dbReference>
<dbReference type="PROSITE" id="PS50294">
    <property type="entry name" value="WD_REPEATS_REGION"/>
    <property type="match status" value="1"/>
</dbReference>
<accession>B4KKN1</accession>
<organism>
    <name type="scientific">Drosophila mojavensis</name>
    <name type="common">Fruit fly</name>
    <dbReference type="NCBI Taxonomy" id="7230"/>
    <lineage>
        <taxon>Eukaryota</taxon>
        <taxon>Metazoa</taxon>
        <taxon>Ecdysozoa</taxon>
        <taxon>Arthropoda</taxon>
        <taxon>Hexapoda</taxon>
        <taxon>Insecta</taxon>
        <taxon>Pterygota</taxon>
        <taxon>Neoptera</taxon>
        <taxon>Endopterygota</taxon>
        <taxon>Diptera</taxon>
        <taxon>Brachycera</taxon>
        <taxon>Muscomorpha</taxon>
        <taxon>Ephydroidea</taxon>
        <taxon>Drosophilidae</taxon>
        <taxon>Drosophila</taxon>
    </lineage>
</organism>
<keyword id="KW-0539">Nucleus</keyword>
<keyword id="KW-1185">Reference proteome</keyword>
<keyword id="KW-0677">Repeat</keyword>
<keyword id="KW-0690">Ribosome biogenesis</keyword>
<keyword id="KW-0698">rRNA processing</keyword>
<keyword id="KW-0853">WD repeat</keyword>
<reference key="1">
    <citation type="journal article" date="2007" name="Nature">
        <title>Evolution of genes and genomes on the Drosophila phylogeny.</title>
        <authorList>
            <consortium name="Drosophila 12 genomes consortium"/>
        </authorList>
    </citation>
    <scope>NUCLEOTIDE SEQUENCE [LARGE SCALE GENOMIC DNA]</scope>
    <source>
        <strain>Tucson 15081-1352.22</strain>
    </source>
</reference>
<feature type="chain" id="PRO_0000369559" description="Ribosome biogenesis protein WDR12 homolog">
    <location>
        <begin position="1"/>
        <end position="419"/>
    </location>
</feature>
<feature type="repeat" description="WD 1">
    <location>
        <begin position="103"/>
        <end position="140"/>
    </location>
</feature>
<feature type="repeat" description="WD 2">
    <location>
        <begin position="142"/>
        <end position="184"/>
    </location>
</feature>
<feature type="repeat" description="WD 3">
    <location>
        <begin position="191"/>
        <end position="230"/>
    </location>
</feature>
<feature type="repeat" description="WD 4">
    <location>
        <begin position="249"/>
        <end position="287"/>
    </location>
</feature>
<feature type="repeat" description="WD 5">
    <location>
        <begin position="289"/>
        <end position="328"/>
    </location>
</feature>
<feature type="repeat" description="WD 6">
    <location>
        <begin position="334"/>
        <end position="374"/>
    </location>
</feature>
<feature type="repeat" description="WD 7">
    <location>
        <begin position="378"/>
        <end position="416"/>
    </location>
</feature>
<feature type="region of interest" description="Ubiquitin-like (UBL) domain" evidence="1">
    <location>
        <begin position="10"/>
        <end position="91"/>
    </location>
</feature>